<name>AAPA1_HELPY</name>
<protein>
    <recommendedName>
        <fullName>Toxic protein AapA1</fullName>
    </recommendedName>
</protein>
<accession>P0DUM4</accession>
<evidence type="ECO:0000269" key="1">
    <source>
    </source>
</evidence>
<evidence type="ECO:0000269" key="2">
    <source>
    </source>
</evidence>
<evidence type="ECO:0000269" key="3">
    <source>
    </source>
</evidence>
<evidence type="ECO:0000303" key="4">
    <source>
    </source>
</evidence>
<evidence type="ECO:0000305" key="5"/>
<evidence type="ECO:0000305" key="6">
    <source>
    </source>
</evidence>
<evidence type="ECO:0000305" key="7">
    <source>
    </source>
</evidence>
<evidence type="ECO:0007829" key="8">
    <source>
        <dbReference type="PDB" id="6GIF"/>
    </source>
</evidence>
<evidence type="ECO:0007829" key="9">
    <source>
        <dbReference type="PDB" id="6GIG"/>
    </source>
</evidence>
<comment type="function">
    <text evidence="1 2 3 7">May be involved in response to oxidative stress (Probable). Toxic component of a type I toxin-antitoxin (TA) system. When overexpression is induced in situ in the absence of its cognate antisense RNA antitoxin IsoA1 it leads to cell growth arrest and cell death without lysis. Neutralized by IsoA1 RNA which forms an extensive duplex with the mRNA (PubMed:28077560, PubMed:31476357, PubMed:33229580). Binds artificial prokaryotic and eukaryotic lipid membranes, with 30-fold higher affinity for prokaryotic membranes. Molecular dynamics suggests the peptide penetrates the membrane leading to lipid reorganization and thinning of the bilayer (PubMed:31476357). Induction of toxin in the absence of antitoxin RNA causes a fast conversion of cells from spiral-shaped to coccoid forms; cells have no visible membrane defects and resemble wild-type 'aging coccoids'. Toxin causes a moderate decrease in membrane potential and ATP content and alterations in peptidoglycan muropeptide abundance; GlcNAc-MurNAc dipeptides increase while GlcNAc-MurNAc tripeptides decrease (i.e. a faster phenocopy of cell aging). Deletion of all 6 AapA/IsoA TA loci in strain B128 leads to slower than wild-type conversion of H2O2-treated cells to the coccoid form. This suggests oxidative stress triggers coccoid transformation via these type I TA systems, although other factors eventually drive the morphology change (PubMed:33229580).</text>
</comment>
<comment type="activity regulation">
    <text evidence="1">Transcription of the aapA1 gene generates a full-length transcript whose folding impedes translation. Processing of the 3' end of the aapA1 message generates a shorter transcript that becomes translatable after a structural rearrangement. The processing also makes it more susceptible to forming dsRNA with IsoA1 which leads to duplex RNA degradation by RNase 3 (rnc).</text>
</comment>
<comment type="subcellular location">
    <subcellularLocation>
        <location evidence="6 7">Cell inner membrane</location>
    </subcellularLocation>
</comment>
<comment type="induction">
    <text evidence="3">Constitutively expressed, increases slightly as cells get older. Does not respond to acid, rifampicin, tetracycline or Ni(2+) stress. Antisense RNA expression decreases strongly under oxidative stress (H2O2 or paraquat), while aapA1 expression decreases only marginally in H2O2 but decreases strongly in response to paraquat. A decrease in antisense RNA leads to an increase in toxin production.</text>
</comment>
<comment type="domain">
    <text evidence="2">Has 3 regions; the N-terminal 8 residues are disordered and not required for toxicity, the central helical segment (residues 9-28) probably crosses the membrane, and the charged C-terminal 2 residues which are required for toxicity.</text>
</comment>
<comment type="miscellaneous">
    <text evidence="2 3">Addition of an SPA-tag or GFP to the C-terminus of the protein renders it non-toxic, but detectable by antibodies.</text>
</comment>
<comment type="miscellaneous">
    <text evidence="3">As Helicobacter ages cells change from a helicoidal shape with multiple flagella at one pole to coccoid forms by 70 hours in culture. As they age peptidoglycan muropeptide abundance alters; GlcNAc-MurNAc dipeptides increase while GlcNAc-MurNAc tripeptides decrease.</text>
</comment>
<comment type="similarity">
    <text evidence="5">Belongs to the AapA toxin family.</text>
</comment>
<sequence>MATKHGKNSWKTLYLKISFLGCKVVVLLKR</sequence>
<gene>
    <name evidence="4" type="primary">aapA1</name>
    <name evidence="5" type="ordered locus">HP_1177.1</name>
</gene>
<keyword id="KW-0002">3D-structure</keyword>
<keyword id="KW-0997">Cell inner membrane</keyword>
<keyword id="KW-1003">Cell membrane</keyword>
<keyword id="KW-0133">Cell shape</keyword>
<keyword id="KW-0446">Lipid-binding</keyword>
<keyword id="KW-0472">Membrane</keyword>
<keyword id="KW-1185">Reference proteome</keyword>
<keyword id="KW-0346">Stress response</keyword>
<keyword id="KW-1277">Toxin-antitoxin system</keyword>
<feature type="chain" id="PRO_0000453284" description="Toxic protein AapA1">
    <location>
        <begin position="1"/>
        <end position="30"/>
    </location>
</feature>
<feature type="mutagenesis site" description="Toxic." evidence="2">
    <location>
        <begin position="1"/>
        <end position="8"/>
    </location>
</feature>
<feature type="mutagenesis site" description="Reduced toxicity." evidence="2">
    <original>W</original>
    <variation>A</variation>
    <location>
        <position position="10"/>
    </location>
</feature>
<feature type="mutagenesis site" description="Reduced toxicity." evidence="2">
    <original>Y</original>
    <variation>A</variation>
    <location>
        <position position="14"/>
    </location>
</feature>
<feature type="mutagenesis site" description="Reduced toxicity." evidence="2">
    <original>L</original>
    <variation>A</variation>
    <location>
        <position position="15"/>
    </location>
</feature>
<feature type="mutagenesis site" description="Reduced toxicity." evidence="2">
    <original>K</original>
    <variation>A</variation>
    <location>
        <position position="16"/>
    </location>
</feature>
<feature type="mutagenesis site" description="Reduced toxicity." evidence="2">
    <original>F</original>
    <variation>A</variation>
    <location>
        <position position="19"/>
    </location>
</feature>
<feature type="mutagenesis site" description="No longer toxic." evidence="2">
    <original>G</original>
    <variation>A</variation>
    <location>
        <position position="21"/>
    </location>
</feature>
<feature type="mutagenesis site" description="Reduced toxicity." evidence="2">
    <original>K</original>
    <variation>A</variation>
    <location>
        <position position="23"/>
    </location>
</feature>
<feature type="mutagenesis site" description="Reduced toxicity." evidence="2">
    <original>V</original>
    <variation>A</variation>
    <location>
        <position position="26"/>
    </location>
</feature>
<feature type="mutagenesis site" description="No longer toxic." evidence="2">
    <location>
        <begin position="29"/>
        <end position="30"/>
    </location>
</feature>
<feature type="mutagenesis site" description="Reduced toxicity." evidence="2">
    <location>
        <position position="30"/>
    </location>
</feature>
<feature type="strand" evidence="9">
    <location>
        <begin position="4"/>
        <end position="8"/>
    </location>
</feature>
<feature type="helix" evidence="8">
    <location>
        <begin position="9"/>
        <end position="28"/>
    </location>
</feature>
<proteinExistence type="evidence at protein level"/>
<organism>
    <name type="scientific">Helicobacter pylori (strain ATCC 700392 / 26695)</name>
    <name type="common">Campylobacter pylori</name>
    <dbReference type="NCBI Taxonomy" id="85962"/>
    <lineage>
        <taxon>Bacteria</taxon>
        <taxon>Pseudomonadati</taxon>
        <taxon>Campylobacterota</taxon>
        <taxon>Epsilonproteobacteria</taxon>
        <taxon>Campylobacterales</taxon>
        <taxon>Helicobacteraceae</taxon>
        <taxon>Helicobacter</taxon>
    </lineage>
</organism>
<dbReference type="EMBL" id="AE000511">
    <property type="status" value="NOT_ANNOTATED_CDS"/>
    <property type="molecule type" value="Genomic_DNA"/>
</dbReference>
<dbReference type="PDB" id="6GIF">
    <property type="method" value="NMR"/>
    <property type="chains" value="A=1-30"/>
</dbReference>
<dbReference type="PDB" id="6GIG">
    <property type="method" value="NMR"/>
    <property type="chains" value="A=1-30"/>
</dbReference>
<dbReference type="PDBsum" id="6GIF"/>
<dbReference type="PDBsum" id="6GIG"/>
<dbReference type="SMR" id="P0DUM4"/>
<dbReference type="InParanoid" id="P0DUM4"/>
<dbReference type="Proteomes" id="UP000000429">
    <property type="component" value="Chromosome"/>
</dbReference>
<dbReference type="GO" id="GO:0005886">
    <property type="term" value="C:plasma membrane"/>
    <property type="evidence" value="ECO:0007669"/>
    <property type="project" value="UniProtKB-SubCell"/>
</dbReference>
<dbReference type="GO" id="GO:0008289">
    <property type="term" value="F:lipid binding"/>
    <property type="evidence" value="ECO:0007669"/>
    <property type="project" value="UniProtKB-KW"/>
</dbReference>
<dbReference type="GO" id="GO:0008360">
    <property type="term" value="P:regulation of cell shape"/>
    <property type="evidence" value="ECO:0007669"/>
    <property type="project" value="UniProtKB-KW"/>
</dbReference>
<reference key="1">
    <citation type="journal article" date="1997" name="Nature">
        <title>The complete genome sequence of the gastric pathogen Helicobacter pylori.</title>
        <authorList>
            <person name="Tomb J.-F."/>
            <person name="White O."/>
            <person name="Kerlavage A.R."/>
            <person name="Clayton R.A."/>
            <person name="Sutton G.G."/>
            <person name="Fleischmann R.D."/>
            <person name="Ketchum K.A."/>
            <person name="Klenk H.-P."/>
            <person name="Gill S.R."/>
            <person name="Dougherty B.A."/>
            <person name="Nelson K.E."/>
            <person name="Quackenbush J."/>
            <person name="Zhou L."/>
            <person name="Kirkness E.F."/>
            <person name="Peterson S.N."/>
            <person name="Loftus B.J."/>
            <person name="Richardson D.L."/>
            <person name="Dodson R.J."/>
            <person name="Khalak H.G."/>
            <person name="Glodek A."/>
            <person name="McKenney K."/>
            <person name="FitzGerald L.M."/>
            <person name="Lee N."/>
            <person name="Adams M.D."/>
            <person name="Hickey E.K."/>
            <person name="Berg D.E."/>
            <person name="Gocayne J.D."/>
            <person name="Utterback T.R."/>
            <person name="Peterson J.D."/>
            <person name="Kelley J.M."/>
            <person name="Cotton M.D."/>
            <person name="Weidman J.F."/>
            <person name="Fujii C."/>
            <person name="Bowman C."/>
            <person name="Watthey L."/>
            <person name="Wallin E."/>
            <person name="Hayes W.S."/>
            <person name="Borodovsky M."/>
            <person name="Karp P.D."/>
            <person name="Smith H.O."/>
            <person name="Fraser C.M."/>
            <person name="Venter J.C."/>
        </authorList>
    </citation>
    <scope>NUCLEOTIDE SEQUENCE [LARGE SCALE GENOMIC DNA]</scope>
    <source>
        <strain>ATCC 700392 / 26695</strain>
    </source>
</reference>
<reference key="2">
    <citation type="journal article" date="2017" name="Nucleic Acids Res.">
        <title>Mechanistic insights into type I toxin antitoxin systems in Helicobacter pylori: the importance of mRNA folding in controlling toxin expression.</title>
        <authorList>
            <person name="Arnion H."/>
            <person name="Korkut D.N."/>
            <person name="Masachis Gelo S."/>
            <person name="Chabas S."/>
            <person name="Reignier J."/>
            <person name="Iost I."/>
            <person name="Darfeuille F."/>
        </authorList>
    </citation>
    <scope>FUNCTION AS A TOXIN</scope>
    <scope>ACTIVITY REGULATION</scope>
    <source>
        <strain>ATCC 700392 / 26695</strain>
    </source>
</reference>
<reference key="3">
    <citation type="journal article" date="2020" name="Proc. Natl. Acad. Sci. U.S.A.">
        <title>A peptide of a type I toxin-antitoxin system induces Helicobacter pylori morphological transformation from spiral shape to coccoids.</title>
        <authorList>
            <person name="El Mortaji L."/>
            <person name="Tejada-Arranz A."/>
            <person name="Rifflet A."/>
            <person name="Boneca I.G."/>
            <person name="Pehau-Arnaudet G."/>
            <person name="Radicella J.P."/>
            <person name="Marsin S."/>
            <person name="De Reuse H."/>
        </authorList>
    </citation>
    <scope>FUNCTION AS A TOXIN</scope>
    <scope>SUBCELLULAR LOCATION</scope>
    <scope>INDUCTION</scope>
    <source>
        <strain>ATCC 700392 / 26695</strain>
    </source>
</reference>
<reference evidence="8 9" key="4">
    <citation type="journal article" date="2020" name="Biochim. Biophys. Acta">
        <title>Structural insights into the AapA1 toxin of Helicobacter pylori.</title>
        <authorList>
            <person name="Korkut D.N."/>
            <person name="Alves I.D."/>
            <person name="Vogel A."/>
            <person name="Chabas S."/>
            <person name="Sharma C.M."/>
            <person name="Martinez D."/>
            <person name="Loquet A."/>
            <person name="Salgado G.F."/>
            <person name="Darfeuille F."/>
        </authorList>
    </citation>
    <scope>STRUCTURE BY NMR</scope>
    <scope>FUNCTION AS A TOXIN</scope>
    <scope>FUNCTION IN STRESS RESPONSE</scope>
    <scope>SUBCELLULAR LOCATION</scope>
    <scope>DOMAIN</scope>
    <scope>LIPID-BINDING</scope>
    <scope>MUTAGENESIS OF 1-MET--ASN-8; TRP-10; TYR-14; LEU-15; LYS-16; PHE-19; GLY-21; LYS-23; VAL-26; 29-LYS-ARG-30 AND ARG-30</scope>
    <source>
        <strain>ATCC 700392 / 26695</strain>
    </source>
</reference>